<protein>
    <recommendedName>
        <fullName>Uncharacterized protein MG377 homolog</fullName>
    </recommendedName>
</protein>
<evidence type="ECO:0007829" key="1">
    <source>
        <dbReference type="PDB" id="1ZXJ"/>
    </source>
</evidence>
<reference key="1">
    <citation type="journal article" date="1996" name="Nucleic Acids Res.">
        <title>Complete sequence analysis of the genome of the bacterium Mycoplasma pneumoniae.</title>
        <authorList>
            <person name="Himmelreich R."/>
            <person name="Hilbert H."/>
            <person name="Plagens H."/>
            <person name="Pirkl E."/>
            <person name="Li B.-C."/>
            <person name="Herrmann R."/>
        </authorList>
    </citation>
    <scope>NUCLEOTIDE SEQUENCE [LARGE SCALE GENOMIC DNA]</scope>
    <source>
        <strain>ATCC 29342 / M129 / Subtype 1</strain>
    </source>
</reference>
<dbReference type="EMBL" id="U00089">
    <property type="protein sequence ID" value="AAB95935.1"/>
    <property type="molecule type" value="Genomic_DNA"/>
</dbReference>
<dbReference type="PIR" id="S73613">
    <property type="entry name" value="S73613"/>
</dbReference>
<dbReference type="RefSeq" id="NP_110244.1">
    <property type="nucleotide sequence ID" value="NC_000912.1"/>
</dbReference>
<dbReference type="RefSeq" id="WP_010874912.1">
    <property type="nucleotide sequence ID" value="NZ_OU342337.1"/>
</dbReference>
<dbReference type="PDB" id="1ZXJ">
    <property type="method" value="X-ray"/>
    <property type="resolution" value="2.80 A"/>
    <property type="chains" value="A/B/C/D=1-193"/>
</dbReference>
<dbReference type="PDBsum" id="1ZXJ"/>
<dbReference type="SMR" id="P75223"/>
<dbReference type="IntAct" id="P75223">
    <property type="interactions" value="2"/>
</dbReference>
<dbReference type="STRING" id="272634.MPN_555"/>
<dbReference type="EnsemblBacteria" id="AAB95935">
    <property type="protein sequence ID" value="AAB95935"/>
    <property type="gene ID" value="MPN_555"/>
</dbReference>
<dbReference type="KEGG" id="mpn:MPN_555"/>
<dbReference type="PATRIC" id="fig|272634.6.peg.617"/>
<dbReference type="HOGENOM" id="CLU_110277_0_0_14"/>
<dbReference type="OrthoDB" id="398943at2"/>
<dbReference type="BioCyc" id="MPNE272634:G1GJ3-911-MONOMER"/>
<dbReference type="EvolutionaryTrace" id="P75223"/>
<dbReference type="Proteomes" id="UP000000808">
    <property type="component" value="Chromosome"/>
</dbReference>
<dbReference type="GO" id="GO:0006457">
    <property type="term" value="P:protein folding"/>
    <property type="evidence" value="ECO:0007669"/>
    <property type="project" value="InterPro"/>
</dbReference>
<dbReference type="GO" id="GO:0015031">
    <property type="term" value="P:protein transport"/>
    <property type="evidence" value="ECO:0007669"/>
    <property type="project" value="InterPro"/>
</dbReference>
<dbReference type="Gene3D" id="1.10.3120.10">
    <property type="entry name" value="Trigger factor, C-terminal domain"/>
    <property type="match status" value="1"/>
</dbReference>
<dbReference type="InterPro" id="IPR054820">
    <property type="entry name" value="MPN555-like"/>
</dbReference>
<dbReference type="InterPro" id="IPR037041">
    <property type="entry name" value="Trigger_fac_C_sf"/>
</dbReference>
<dbReference type="InterPro" id="IPR027304">
    <property type="entry name" value="Trigger_fact/SurA_dom_sf"/>
</dbReference>
<dbReference type="NCBIfam" id="NF045756">
    <property type="entry name" value="MPN555"/>
    <property type="match status" value="1"/>
</dbReference>
<dbReference type="SUPFAM" id="SSF109998">
    <property type="entry name" value="Triger factor/SurA peptide-binding domain-like"/>
    <property type="match status" value="1"/>
</dbReference>
<proteinExistence type="evidence at protein level"/>
<organism>
    <name type="scientific">Mycoplasma pneumoniae (strain ATCC 29342 / M129 / Subtype 1)</name>
    <name type="common">Mycoplasmoides pneumoniae</name>
    <dbReference type="NCBI Taxonomy" id="272634"/>
    <lineage>
        <taxon>Bacteria</taxon>
        <taxon>Bacillati</taxon>
        <taxon>Mycoplasmatota</taxon>
        <taxon>Mycoplasmoidales</taxon>
        <taxon>Mycoplasmoidaceae</taxon>
        <taxon>Mycoplasmoides</taxon>
    </lineage>
</organism>
<name>Y555_MYCPN</name>
<gene>
    <name type="ordered locus">MPN_555</name>
    <name type="ORF">H03_orf193o</name>
    <name type="ORF">MP287</name>
</gene>
<sequence length="193" mass="22434">MATNLKSTAKLVKPIQYDEVIEVERIFADPAFIEQHRQRILASFKDAKESALYHELTHIVIKDNLFSCAMNAIVGYFEFNIDEAELKNVMEGLKRDVIQGAEDNTVQAIAEKIIKKALVFNHLQKEWKVEITDEVVKNVISLYYEKTNQSVREYLDDKQKFEGVRTALLEERMVLETINHFKFHFNLTGQLPN</sequence>
<keyword id="KW-0002">3D-structure</keyword>
<keyword id="KW-1185">Reference proteome</keyword>
<accession>P75223</accession>
<feature type="chain" id="PRO_0000210581" description="Uncharacterized protein MG377 homolog">
    <location>
        <begin position="1"/>
        <end position="193"/>
    </location>
</feature>
<feature type="strand" evidence="1">
    <location>
        <begin position="8"/>
        <end position="11"/>
    </location>
</feature>
<feature type="strand" evidence="1">
    <location>
        <begin position="21"/>
        <end position="23"/>
    </location>
</feature>
<feature type="helix" evidence="1">
    <location>
        <begin position="30"/>
        <end position="41"/>
    </location>
</feature>
<feature type="helix" evidence="1">
    <location>
        <begin position="49"/>
        <end position="73"/>
    </location>
</feature>
<feature type="helix" evidence="1">
    <location>
        <begin position="74"/>
        <end position="76"/>
    </location>
</feature>
<feature type="strand" evidence="1">
    <location>
        <begin position="77"/>
        <end position="80"/>
    </location>
</feature>
<feature type="helix" evidence="1">
    <location>
        <begin position="83"/>
        <end position="95"/>
    </location>
</feature>
<feature type="helix" evidence="1">
    <location>
        <begin position="104"/>
        <end position="127"/>
    </location>
</feature>
<feature type="helix" evidence="1">
    <location>
        <begin position="133"/>
        <end position="146"/>
    </location>
</feature>
<feature type="helix" evidence="1">
    <location>
        <begin position="152"/>
        <end position="155"/>
    </location>
</feature>
<feature type="helix" evidence="1">
    <location>
        <begin position="158"/>
        <end position="179"/>
    </location>
</feature>
<feature type="strand" evidence="1">
    <location>
        <begin position="183"/>
        <end position="185"/>
    </location>
</feature>